<evidence type="ECO:0000250" key="1"/>
<evidence type="ECO:0000255" key="2"/>
<evidence type="ECO:0000255" key="3">
    <source>
        <dbReference type="PROSITE-ProRule" id="PRU00521"/>
    </source>
</evidence>
<accession>P51051</accession>
<reference key="1">
    <citation type="journal article" date="1995" name="Neuron">
        <title>Melatonin receptors are for the birds: molecular analysis of two receptor subtypes differentially expressed in chick brain.</title>
        <authorList>
            <person name="Reppert S.M."/>
            <person name="Weaver D.R."/>
            <person name="Cassone V.M."/>
            <person name="Godson C."/>
            <person name="Kolakowski L.F. Jr."/>
        </authorList>
    </citation>
    <scope>NUCLEOTIDE SEQUENCE [MRNA]</scope>
</reference>
<gene>
    <name type="primary">mtnr1b</name>
</gene>
<protein>
    <recommendedName>
        <fullName>Melatonin receptor type 1B</fullName>
        <shortName>Mel-1B-R</shortName>
        <shortName>Mel1b receptor</shortName>
    </recommendedName>
</protein>
<name>MTR1B_XENLA</name>
<sequence length="152" mass="17832">HSFVYEKLFSLWNTILYVCLIWTLTVVATVPNFFVGSLEYDPRIYSCTFVQTVSSSYTITVVVIHFILPITVVTFCYLRIWILVIQVRRKVKSEFKPRMKQSDFRNFLTMFVVFVIFAFCWAPLNFIGLAVSINPTEVAPKIPEWLFVVSYF</sequence>
<keyword id="KW-1003">Cell membrane</keyword>
<keyword id="KW-0297">G-protein coupled receptor</keyword>
<keyword id="KW-0472">Membrane</keyword>
<keyword id="KW-0675">Receptor</keyword>
<keyword id="KW-1185">Reference proteome</keyword>
<keyword id="KW-0807">Transducer</keyword>
<keyword id="KW-0812">Transmembrane</keyword>
<keyword id="KW-1133">Transmembrane helix</keyword>
<feature type="chain" id="PRO_0000069874" description="Melatonin receptor type 1B">
    <location>
        <begin position="1" status="less than"/>
        <end position="152" status="greater than"/>
    </location>
</feature>
<feature type="topological domain" description="Cytoplasmic" evidence="2">
    <location>
        <begin position="1" status="less than"/>
        <end position="12"/>
    </location>
</feature>
<feature type="transmembrane region" description="Helical; Name=4" evidence="2">
    <location>
        <begin position="13"/>
        <end position="33"/>
    </location>
</feature>
<feature type="topological domain" description="Extracellular" evidence="2">
    <location>
        <begin position="34"/>
        <end position="57"/>
    </location>
</feature>
<feature type="transmembrane region" description="Helical; Name=5" evidence="2">
    <location>
        <begin position="58"/>
        <end position="78"/>
    </location>
</feature>
<feature type="topological domain" description="Cytoplasmic" evidence="2">
    <location>
        <begin position="79"/>
        <end position="110"/>
    </location>
</feature>
<feature type="transmembrane region" description="Helical; Name=6" evidence="2">
    <location>
        <begin position="111"/>
        <end position="131"/>
    </location>
</feature>
<feature type="topological domain" description="Extracellular" evidence="2">
    <location>
        <begin position="132"/>
        <end position="144"/>
    </location>
</feature>
<feature type="transmembrane region" description="Helical; Name=7" evidence="2">
    <location>
        <begin position="145"/>
        <end position="152" status="greater than"/>
    </location>
</feature>
<feature type="non-terminal residue">
    <location>
        <position position="1"/>
    </location>
</feature>
<feature type="non-terminal residue">
    <location>
        <position position="152"/>
    </location>
</feature>
<organism>
    <name type="scientific">Xenopus laevis</name>
    <name type="common">African clawed frog</name>
    <dbReference type="NCBI Taxonomy" id="8355"/>
    <lineage>
        <taxon>Eukaryota</taxon>
        <taxon>Metazoa</taxon>
        <taxon>Chordata</taxon>
        <taxon>Craniata</taxon>
        <taxon>Vertebrata</taxon>
        <taxon>Euteleostomi</taxon>
        <taxon>Amphibia</taxon>
        <taxon>Batrachia</taxon>
        <taxon>Anura</taxon>
        <taxon>Pipoidea</taxon>
        <taxon>Pipidae</taxon>
        <taxon>Xenopodinae</taxon>
        <taxon>Xenopus</taxon>
        <taxon>Xenopus</taxon>
    </lineage>
</organism>
<proteinExistence type="evidence at transcript level"/>
<comment type="function">
    <text evidence="1">High affinity receptor for melatonin. The activity of this receptor is mediated by pertussis toxin sensitive G proteins that inhibits adenylate cyclase activity (By similarity).</text>
</comment>
<comment type="subcellular location">
    <subcellularLocation>
        <location>Cell membrane</location>
        <topology>Multi-pass membrane protein</topology>
    </subcellularLocation>
</comment>
<comment type="similarity">
    <text evidence="3">Belongs to the G-protein coupled receptor 1 family.</text>
</comment>
<dbReference type="EMBL" id="U31827">
    <property type="protein sequence ID" value="AAA92501.1"/>
    <property type="molecule type" value="mRNA"/>
</dbReference>
<dbReference type="SMR" id="P51051"/>
<dbReference type="AGR" id="Xenbase:XB-GENE-997880"/>
<dbReference type="Xenbase" id="XB-GENE-997880">
    <property type="gene designation" value="mtnr1b.S"/>
</dbReference>
<dbReference type="Proteomes" id="UP000186698">
    <property type="component" value="Unplaced"/>
</dbReference>
<dbReference type="GO" id="GO:0005886">
    <property type="term" value="C:plasma membrane"/>
    <property type="evidence" value="ECO:0000318"/>
    <property type="project" value="GO_Central"/>
</dbReference>
<dbReference type="GO" id="GO:0004930">
    <property type="term" value="F:G protein-coupled receptor activity"/>
    <property type="evidence" value="ECO:0000318"/>
    <property type="project" value="GO_Central"/>
</dbReference>
<dbReference type="GO" id="GO:0008502">
    <property type="term" value="F:melatonin receptor activity"/>
    <property type="evidence" value="ECO:0007669"/>
    <property type="project" value="InterPro"/>
</dbReference>
<dbReference type="GO" id="GO:0007186">
    <property type="term" value="P:G protein-coupled receptor signaling pathway"/>
    <property type="evidence" value="ECO:0000318"/>
    <property type="project" value="GO_Central"/>
</dbReference>
<dbReference type="FunFam" id="1.20.1070.10:FF:000557">
    <property type="entry name" value="Melatonin receptor type 1A"/>
    <property type="match status" value="1"/>
</dbReference>
<dbReference type="Gene3D" id="1.20.1070.10">
    <property type="entry name" value="Rhodopsin 7-helix transmembrane proteins"/>
    <property type="match status" value="1"/>
</dbReference>
<dbReference type="InterPro" id="IPR000276">
    <property type="entry name" value="GPCR_Rhodpsn"/>
</dbReference>
<dbReference type="InterPro" id="IPR017452">
    <property type="entry name" value="GPCR_Rhodpsn_7TM"/>
</dbReference>
<dbReference type="InterPro" id="IPR000025">
    <property type="entry name" value="Melatonin_rcpt"/>
</dbReference>
<dbReference type="PANTHER" id="PTHR24228">
    <property type="entry name" value="B2 BRADYKININ RECEPTOR/ANGIOTENSIN II RECEPTOR"/>
    <property type="match status" value="1"/>
</dbReference>
<dbReference type="PANTHER" id="PTHR24228:SF54">
    <property type="entry name" value="MELATONIN RECEPTOR TYPE 1B"/>
    <property type="match status" value="1"/>
</dbReference>
<dbReference type="Pfam" id="PF00001">
    <property type="entry name" value="7tm_1"/>
    <property type="match status" value="1"/>
</dbReference>
<dbReference type="PRINTS" id="PR00237">
    <property type="entry name" value="GPCRRHODOPSN"/>
</dbReference>
<dbReference type="PRINTS" id="PR00857">
    <property type="entry name" value="MELATONINR"/>
</dbReference>
<dbReference type="SUPFAM" id="SSF81321">
    <property type="entry name" value="Family A G protein-coupled receptor-like"/>
    <property type="match status" value="1"/>
</dbReference>
<dbReference type="PROSITE" id="PS50262">
    <property type="entry name" value="G_PROTEIN_RECEP_F1_2"/>
    <property type="match status" value="1"/>
</dbReference>